<accession>B8DDP6</accession>
<reference key="1">
    <citation type="journal article" date="2011" name="J. Bacteriol.">
        <title>Genome sequence of lineage III Listeria monocytogenes strain HCC23.</title>
        <authorList>
            <person name="Steele C.L."/>
            <person name="Donaldson J.R."/>
            <person name="Paul D."/>
            <person name="Banes M.M."/>
            <person name="Arick T."/>
            <person name="Bridges S.M."/>
            <person name="Lawrence M.L."/>
        </authorList>
    </citation>
    <scope>NUCLEOTIDE SEQUENCE [LARGE SCALE GENOMIC DNA]</scope>
    <source>
        <strain>HCC23</strain>
    </source>
</reference>
<comment type="function">
    <text evidence="2">Catalyzes the reversible phosphorolytic breakdown of the N-glycosidic bond in the beta-(deoxy)ribonucleoside molecules, with the formation of the corresponding free purine bases and pentose-1-phosphate.</text>
</comment>
<comment type="catalytic activity">
    <reaction evidence="2">
        <text>a purine D-ribonucleoside + phosphate = a purine nucleobase + alpha-D-ribose 1-phosphate</text>
        <dbReference type="Rhea" id="RHEA:19805"/>
        <dbReference type="ChEBI" id="CHEBI:26386"/>
        <dbReference type="ChEBI" id="CHEBI:43474"/>
        <dbReference type="ChEBI" id="CHEBI:57720"/>
        <dbReference type="ChEBI" id="CHEBI:142355"/>
        <dbReference type="EC" id="2.4.2.1"/>
    </reaction>
</comment>
<comment type="catalytic activity">
    <reaction evidence="2">
        <text>a purine 2'-deoxy-D-ribonucleoside + phosphate = a purine nucleobase + 2-deoxy-alpha-D-ribose 1-phosphate</text>
        <dbReference type="Rhea" id="RHEA:36431"/>
        <dbReference type="ChEBI" id="CHEBI:26386"/>
        <dbReference type="ChEBI" id="CHEBI:43474"/>
        <dbReference type="ChEBI" id="CHEBI:57259"/>
        <dbReference type="ChEBI" id="CHEBI:142361"/>
        <dbReference type="EC" id="2.4.2.1"/>
    </reaction>
</comment>
<comment type="subunit">
    <text evidence="2">Homohexamer; trimer of homodimers.</text>
</comment>
<comment type="similarity">
    <text evidence="2">Belongs to the PNP/UDP phosphorylase family.</text>
</comment>
<gene>
    <name evidence="2" type="primary">deoD</name>
    <name type="ordered locus">LMHCC_0700</name>
</gene>
<proteinExistence type="inferred from homology"/>
<organism>
    <name type="scientific">Listeria monocytogenes serotype 4a (strain HCC23)</name>
    <dbReference type="NCBI Taxonomy" id="552536"/>
    <lineage>
        <taxon>Bacteria</taxon>
        <taxon>Bacillati</taxon>
        <taxon>Bacillota</taxon>
        <taxon>Bacilli</taxon>
        <taxon>Bacillales</taxon>
        <taxon>Listeriaceae</taxon>
        <taxon>Listeria</taxon>
    </lineage>
</organism>
<name>DEOD_LISMH</name>
<feature type="chain" id="PRO_1000186211" description="Purine nucleoside phosphorylase DeoD-type">
    <location>
        <begin position="1"/>
        <end position="233"/>
    </location>
</feature>
<feature type="active site" description="Proton donor" evidence="2">
    <location>
        <position position="203"/>
    </location>
</feature>
<feature type="binding site" evidence="1">
    <location>
        <position position="4"/>
    </location>
    <ligand>
        <name>a purine D-ribonucleoside</name>
        <dbReference type="ChEBI" id="CHEBI:142355"/>
        <note>ligand shared between dimeric partners</note>
    </ligand>
</feature>
<feature type="binding site" description="in other chain" evidence="1">
    <location>
        <position position="20"/>
    </location>
    <ligand>
        <name>phosphate</name>
        <dbReference type="ChEBI" id="CHEBI:43474"/>
        <note>ligand shared between dimeric partners</note>
    </ligand>
</feature>
<feature type="binding site" description="in other chain" evidence="1">
    <location>
        <position position="24"/>
    </location>
    <ligand>
        <name>phosphate</name>
        <dbReference type="ChEBI" id="CHEBI:43474"/>
        <note>ligand shared between dimeric partners</note>
    </ligand>
</feature>
<feature type="binding site" evidence="1">
    <location>
        <position position="43"/>
    </location>
    <ligand>
        <name>phosphate</name>
        <dbReference type="ChEBI" id="CHEBI:43474"/>
        <note>ligand shared between dimeric partners</note>
    </ligand>
</feature>
<feature type="binding site" description="in other chain" evidence="1">
    <location>
        <begin position="87"/>
        <end position="90"/>
    </location>
    <ligand>
        <name>phosphate</name>
        <dbReference type="ChEBI" id="CHEBI:43474"/>
        <note>ligand shared between dimeric partners</note>
    </ligand>
</feature>
<feature type="binding site" description="in other chain" evidence="1">
    <location>
        <begin position="178"/>
        <end position="180"/>
    </location>
    <ligand>
        <name>a purine D-ribonucleoside</name>
        <dbReference type="ChEBI" id="CHEBI:142355"/>
        <note>ligand shared between dimeric partners</note>
    </ligand>
</feature>
<feature type="binding site" description="in other chain" evidence="1">
    <location>
        <begin position="202"/>
        <end position="203"/>
    </location>
    <ligand>
        <name>a purine D-ribonucleoside</name>
        <dbReference type="ChEBI" id="CHEBI:142355"/>
        <note>ligand shared between dimeric partners</note>
    </ligand>
</feature>
<feature type="site" description="Important for catalytic activity" evidence="2">
    <location>
        <position position="216"/>
    </location>
</feature>
<sequence length="233" mass="25357">MSVHIEAKQGEIAETILLPGDPLRAKYIAETFLEDVVLFNQVRGMLGFTGTYKGEKVSVMGTGMGIPSISIYVNELIQSYDVKNLIRVGTMGGIQADVKVRDVVIAQAASTDSQINRNTFAGVDFAPVADFSLLKKAYDAGIEKGLSLKVGNVFSADRFYNDQLDKQQLADYGVLGIEMEAAALYTLAQKYGRRALAILTVSDHIFTGEETSAEERQTTFNDMIVVALEAAIK</sequence>
<evidence type="ECO:0000250" key="1">
    <source>
        <dbReference type="UniProtKB" id="P50389"/>
    </source>
</evidence>
<evidence type="ECO:0000255" key="2">
    <source>
        <dbReference type="HAMAP-Rule" id="MF_01627"/>
    </source>
</evidence>
<dbReference type="EC" id="2.4.2.1" evidence="2"/>
<dbReference type="EMBL" id="CP001175">
    <property type="protein sequence ID" value="ACK39055.1"/>
    <property type="molecule type" value="Genomic_DNA"/>
</dbReference>
<dbReference type="RefSeq" id="WP_003723411.1">
    <property type="nucleotide sequence ID" value="NC_011660.1"/>
</dbReference>
<dbReference type="SMR" id="B8DDP6"/>
<dbReference type="GeneID" id="87010957"/>
<dbReference type="KEGG" id="lmh:LMHCC_0700"/>
<dbReference type="HOGENOM" id="CLU_068457_2_0_9"/>
<dbReference type="GO" id="GO:0005829">
    <property type="term" value="C:cytosol"/>
    <property type="evidence" value="ECO:0007669"/>
    <property type="project" value="TreeGrafter"/>
</dbReference>
<dbReference type="GO" id="GO:0004731">
    <property type="term" value="F:purine-nucleoside phosphorylase activity"/>
    <property type="evidence" value="ECO:0007669"/>
    <property type="project" value="UniProtKB-UniRule"/>
</dbReference>
<dbReference type="GO" id="GO:0006152">
    <property type="term" value="P:purine nucleoside catabolic process"/>
    <property type="evidence" value="ECO:0007669"/>
    <property type="project" value="TreeGrafter"/>
</dbReference>
<dbReference type="CDD" id="cd09006">
    <property type="entry name" value="PNP_EcPNPI-like"/>
    <property type="match status" value="1"/>
</dbReference>
<dbReference type="Gene3D" id="3.40.50.1580">
    <property type="entry name" value="Nucleoside phosphorylase domain"/>
    <property type="match status" value="1"/>
</dbReference>
<dbReference type="HAMAP" id="MF_01627">
    <property type="entry name" value="Pur_nucleosid_phosp"/>
    <property type="match status" value="1"/>
</dbReference>
<dbReference type="InterPro" id="IPR004402">
    <property type="entry name" value="DeoD-type"/>
</dbReference>
<dbReference type="InterPro" id="IPR018016">
    <property type="entry name" value="Nucleoside_phosphorylase_CS"/>
</dbReference>
<dbReference type="InterPro" id="IPR000845">
    <property type="entry name" value="Nucleoside_phosphorylase_d"/>
</dbReference>
<dbReference type="InterPro" id="IPR035994">
    <property type="entry name" value="Nucleoside_phosphorylase_sf"/>
</dbReference>
<dbReference type="NCBIfam" id="TIGR00107">
    <property type="entry name" value="deoD"/>
    <property type="match status" value="1"/>
</dbReference>
<dbReference type="NCBIfam" id="NF004489">
    <property type="entry name" value="PRK05819.1"/>
    <property type="match status" value="1"/>
</dbReference>
<dbReference type="NCBIfam" id="NF009914">
    <property type="entry name" value="PRK13374.1"/>
    <property type="match status" value="1"/>
</dbReference>
<dbReference type="PANTHER" id="PTHR43691:SF11">
    <property type="entry name" value="FI09636P-RELATED"/>
    <property type="match status" value="1"/>
</dbReference>
<dbReference type="PANTHER" id="PTHR43691">
    <property type="entry name" value="URIDINE PHOSPHORYLASE"/>
    <property type="match status" value="1"/>
</dbReference>
<dbReference type="Pfam" id="PF01048">
    <property type="entry name" value="PNP_UDP_1"/>
    <property type="match status" value="1"/>
</dbReference>
<dbReference type="SUPFAM" id="SSF53167">
    <property type="entry name" value="Purine and uridine phosphorylases"/>
    <property type="match status" value="1"/>
</dbReference>
<dbReference type="PROSITE" id="PS01232">
    <property type="entry name" value="PNP_UDP_1"/>
    <property type="match status" value="1"/>
</dbReference>
<protein>
    <recommendedName>
        <fullName evidence="2">Purine nucleoside phosphorylase DeoD-type</fullName>
        <shortName evidence="2">PNP</shortName>
        <ecNumber evidence="2">2.4.2.1</ecNumber>
    </recommendedName>
</protein>
<keyword id="KW-0328">Glycosyltransferase</keyword>
<keyword id="KW-0808">Transferase</keyword>